<organism>
    <name type="scientific">Arabidopsis thaliana</name>
    <name type="common">Mouse-ear cress</name>
    <dbReference type="NCBI Taxonomy" id="3702"/>
    <lineage>
        <taxon>Eukaryota</taxon>
        <taxon>Viridiplantae</taxon>
        <taxon>Streptophyta</taxon>
        <taxon>Embryophyta</taxon>
        <taxon>Tracheophyta</taxon>
        <taxon>Spermatophyta</taxon>
        <taxon>Magnoliopsida</taxon>
        <taxon>eudicotyledons</taxon>
        <taxon>Gunneridae</taxon>
        <taxon>Pentapetalae</taxon>
        <taxon>rosids</taxon>
        <taxon>malvids</taxon>
        <taxon>Brassicales</taxon>
        <taxon>Brassicaceae</taxon>
        <taxon>Camelineae</taxon>
        <taxon>Arabidopsis</taxon>
    </lineage>
</organism>
<keyword id="KW-0025">Alternative splicing</keyword>
<keyword id="KW-0067">ATP-binding</keyword>
<keyword id="KW-0418">Kinase</keyword>
<keyword id="KW-0547">Nucleotide-binding</keyword>
<keyword id="KW-1185">Reference proteome</keyword>
<keyword id="KW-0723">Serine/threonine-protein kinase</keyword>
<keyword id="KW-0808">Transferase</keyword>
<name>WNK2_ARATH</name>
<accession>Q8S8Y9</accession>
<accession>Q9LUV8</accession>
<evidence type="ECO:0000250" key="1">
    <source>
        <dbReference type="UniProtKB" id="Q9H4A3"/>
    </source>
</evidence>
<evidence type="ECO:0000250" key="2">
    <source>
        <dbReference type="UniProtKB" id="Q9JIH7"/>
    </source>
</evidence>
<evidence type="ECO:0000255" key="3">
    <source>
        <dbReference type="PROSITE-ProRule" id="PRU00159"/>
    </source>
</evidence>
<evidence type="ECO:0000256" key="4">
    <source>
        <dbReference type="SAM" id="MobiDB-lite"/>
    </source>
</evidence>
<evidence type="ECO:0000269" key="5">
    <source>
    </source>
</evidence>
<evidence type="ECO:0000269" key="6">
    <source>
    </source>
</evidence>
<evidence type="ECO:0000303" key="7">
    <source>
    </source>
</evidence>
<evidence type="ECO:0000303" key="8">
    <source ref="4"/>
</evidence>
<evidence type="ECO:0000303" key="9">
    <source ref="5"/>
</evidence>
<evidence type="ECO:0000303" key="10">
    <source ref="6"/>
</evidence>
<evidence type="ECO:0000305" key="11"/>
<proteinExistence type="evidence at protein level"/>
<gene>
    <name type="primary">WNK2</name>
    <name type="ordered locus">At3g22420</name>
    <name type="ORF">MCB17.15</name>
</gene>
<protein>
    <recommendedName>
        <fullName>Serine/threonine-protein kinase WNK2</fullName>
        <shortName>AtWNK2</shortName>
        <ecNumber>2.7.11.1</ecNumber>
    </recommendedName>
    <alternativeName>
        <fullName>Protein kinase with no lysine 2</fullName>
    </alternativeName>
</protein>
<feature type="chain" id="PRO_0000351660" description="Serine/threonine-protein kinase WNK2">
    <location>
        <begin position="1"/>
        <end position="568"/>
    </location>
</feature>
<feature type="domain" description="Protein kinase" evidence="3">
    <location>
        <begin position="24"/>
        <end position="281"/>
    </location>
</feature>
<feature type="region of interest" description="Disordered" evidence="4">
    <location>
        <begin position="453"/>
        <end position="473"/>
    </location>
</feature>
<feature type="compositionally biased region" description="Basic and acidic residues" evidence="4">
    <location>
        <begin position="463"/>
        <end position="472"/>
    </location>
</feature>
<feature type="active site" description="Proton acceptor" evidence="2">
    <location>
        <position position="171"/>
    </location>
</feature>
<feature type="binding site" evidence="1">
    <location>
        <begin position="104"/>
        <end position="107"/>
    </location>
    <ligand>
        <name>ATP</name>
        <dbReference type="ChEBI" id="CHEBI:30616"/>
    </ligand>
</feature>
<feature type="binding site" evidence="1">
    <location>
        <position position="154"/>
    </location>
    <ligand>
        <name>ATP</name>
        <dbReference type="ChEBI" id="CHEBI:30616"/>
    </ligand>
</feature>
<feature type="splice variant" id="VSP_035528" description="In isoform 2." evidence="7 8 9 10">
    <original>T</original>
    <variation>TSKPSHHWNFIALIMFFTTLDLPLLCLCVVKGT</variation>
    <location>
        <position position="189"/>
    </location>
</feature>
<feature type="splice variant" id="VSP_035529" description="In isoform 2." evidence="7 8 9 10">
    <original>G</original>
    <variation>GIVSIFFDSFKIIGLKNVTRFRVLGNVG</variation>
    <location>
        <position position="365"/>
    </location>
</feature>
<dbReference type="EC" id="2.7.11.1"/>
<dbReference type="EMBL" id="AB084267">
    <property type="protein sequence ID" value="BAB91126.1"/>
    <property type="molecule type" value="mRNA"/>
</dbReference>
<dbReference type="EMBL" id="AB022215">
    <property type="protein sequence ID" value="BAB01779.1"/>
    <property type="status" value="ALT_SEQ"/>
    <property type="molecule type" value="Genomic_DNA"/>
</dbReference>
<dbReference type="EMBL" id="CP002686">
    <property type="protein sequence ID" value="AEE76633.1"/>
    <property type="molecule type" value="Genomic_DNA"/>
</dbReference>
<dbReference type="EMBL" id="CP002686">
    <property type="protein sequence ID" value="AEE76634.1"/>
    <property type="molecule type" value="Genomic_DNA"/>
</dbReference>
<dbReference type="EMBL" id="BT030355">
    <property type="protein sequence ID" value="ABO38768.1"/>
    <property type="molecule type" value="mRNA"/>
</dbReference>
<dbReference type="EMBL" id="AK227215">
    <property type="protein sequence ID" value="BAE99253.1"/>
    <property type="molecule type" value="mRNA"/>
</dbReference>
<dbReference type="EMBL" id="AY086628">
    <property type="protein sequence ID" value="AAM63686.1"/>
    <property type="molecule type" value="mRNA"/>
</dbReference>
<dbReference type="RefSeq" id="NP_188881.1">
    <molecule id="Q8S8Y9-1"/>
    <property type="nucleotide sequence ID" value="NM_113139.3"/>
</dbReference>
<dbReference type="RefSeq" id="NP_974354.1">
    <molecule id="Q8S8Y9-2"/>
    <property type="nucleotide sequence ID" value="NM_202625.2"/>
</dbReference>
<dbReference type="SMR" id="Q8S8Y9"/>
<dbReference type="BioGRID" id="7142">
    <property type="interactions" value="12"/>
</dbReference>
<dbReference type="FunCoup" id="Q8S8Y9">
    <property type="interactions" value="1425"/>
</dbReference>
<dbReference type="IntAct" id="Q8S8Y9">
    <property type="interactions" value="2"/>
</dbReference>
<dbReference type="STRING" id="3702.Q8S8Y9"/>
<dbReference type="iPTMnet" id="Q8S8Y9"/>
<dbReference type="PaxDb" id="3702-AT3G22420.2"/>
<dbReference type="ProteomicsDB" id="242397">
    <molecule id="Q8S8Y9-1"/>
</dbReference>
<dbReference type="EnsemblPlants" id="AT3G22420.1">
    <molecule id="Q8S8Y9-1"/>
    <property type="protein sequence ID" value="AT3G22420.1"/>
    <property type="gene ID" value="AT3G22420"/>
</dbReference>
<dbReference type="EnsemblPlants" id="AT3G22420.2">
    <molecule id="Q8S8Y9-2"/>
    <property type="protein sequence ID" value="AT3G22420.2"/>
    <property type="gene ID" value="AT3G22420"/>
</dbReference>
<dbReference type="GeneID" id="821810"/>
<dbReference type="Gramene" id="AT3G22420.1">
    <molecule id="Q8S8Y9-1"/>
    <property type="protein sequence ID" value="AT3G22420.1"/>
    <property type="gene ID" value="AT3G22420"/>
</dbReference>
<dbReference type="Gramene" id="AT3G22420.2">
    <molecule id="Q8S8Y9-2"/>
    <property type="protein sequence ID" value="AT3G22420.2"/>
    <property type="gene ID" value="AT3G22420"/>
</dbReference>
<dbReference type="KEGG" id="ath:AT3G22420"/>
<dbReference type="Araport" id="AT3G22420"/>
<dbReference type="TAIR" id="AT3G22420">
    <property type="gene designation" value="WNK2"/>
</dbReference>
<dbReference type="eggNOG" id="KOG0584">
    <property type="taxonomic scope" value="Eukaryota"/>
</dbReference>
<dbReference type="HOGENOM" id="CLU_000288_142_2_1"/>
<dbReference type="InParanoid" id="Q8S8Y9"/>
<dbReference type="OrthoDB" id="4062651at2759"/>
<dbReference type="PhylomeDB" id="Q8S8Y9"/>
<dbReference type="PRO" id="PR:Q8S8Y9"/>
<dbReference type="Proteomes" id="UP000006548">
    <property type="component" value="Chromosome 3"/>
</dbReference>
<dbReference type="ExpressionAtlas" id="Q8S8Y9">
    <property type="expression patterns" value="baseline and differential"/>
</dbReference>
<dbReference type="GO" id="GO:0005524">
    <property type="term" value="F:ATP binding"/>
    <property type="evidence" value="ECO:0007669"/>
    <property type="project" value="UniProtKB-KW"/>
</dbReference>
<dbReference type="GO" id="GO:0004672">
    <property type="term" value="F:protein kinase activity"/>
    <property type="evidence" value="ECO:0000304"/>
    <property type="project" value="TAIR"/>
</dbReference>
<dbReference type="GO" id="GO:0106310">
    <property type="term" value="F:protein serine kinase activity"/>
    <property type="evidence" value="ECO:0007669"/>
    <property type="project" value="RHEA"/>
</dbReference>
<dbReference type="GO" id="GO:0004674">
    <property type="term" value="F:protein serine/threonine kinase activity"/>
    <property type="evidence" value="ECO:0007669"/>
    <property type="project" value="UniProtKB-KW"/>
</dbReference>
<dbReference type="GO" id="GO:0048573">
    <property type="term" value="P:photoperiodism, flowering"/>
    <property type="evidence" value="ECO:0000315"/>
    <property type="project" value="TAIR"/>
</dbReference>
<dbReference type="GO" id="GO:0006468">
    <property type="term" value="P:protein phosphorylation"/>
    <property type="evidence" value="ECO:0000304"/>
    <property type="project" value="TAIR"/>
</dbReference>
<dbReference type="CDD" id="cd13983">
    <property type="entry name" value="STKc_WNK"/>
    <property type="match status" value="1"/>
</dbReference>
<dbReference type="FunFam" id="3.30.200.20:FF:000075">
    <property type="entry name" value="Probable serine/threonine-protein kinase WNK1"/>
    <property type="match status" value="1"/>
</dbReference>
<dbReference type="FunFam" id="1.10.510.10:FF:000046">
    <property type="entry name" value="probable serine/threonine-protein kinase WNK9"/>
    <property type="match status" value="1"/>
</dbReference>
<dbReference type="Gene3D" id="3.10.20.90">
    <property type="entry name" value="Phosphatidylinositol 3-kinase Catalytic Subunit, Chain A, domain 1"/>
    <property type="match status" value="1"/>
</dbReference>
<dbReference type="Gene3D" id="3.30.200.20">
    <property type="entry name" value="Phosphorylase Kinase, domain 1"/>
    <property type="match status" value="1"/>
</dbReference>
<dbReference type="Gene3D" id="1.10.510.10">
    <property type="entry name" value="Transferase(Phosphotransferase) domain 1"/>
    <property type="match status" value="1"/>
</dbReference>
<dbReference type="InterPro" id="IPR011009">
    <property type="entry name" value="Kinase-like_dom_sf"/>
</dbReference>
<dbReference type="InterPro" id="IPR000719">
    <property type="entry name" value="Prot_kinase_dom"/>
</dbReference>
<dbReference type="InterPro" id="IPR008271">
    <property type="entry name" value="Ser/Thr_kinase_AS"/>
</dbReference>
<dbReference type="InterPro" id="IPR050588">
    <property type="entry name" value="WNK_Ser-Thr_kinase"/>
</dbReference>
<dbReference type="PANTHER" id="PTHR13902">
    <property type="entry name" value="SERINE/THREONINE-PROTEIN KINASE WNK WITH NO LYSINE -RELATED"/>
    <property type="match status" value="1"/>
</dbReference>
<dbReference type="Pfam" id="PF00069">
    <property type="entry name" value="Pkinase"/>
    <property type="match status" value="1"/>
</dbReference>
<dbReference type="SMART" id="SM00220">
    <property type="entry name" value="S_TKc"/>
    <property type="match status" value="1"/>
</dbReference>
<dbReference type="SUPFAM" id="SSF56112">
    <property type="entry name" value="Protein kinase-like (PK-like)"/>
    <property type="match status" value="1"/>
</dbReference>
<dbReference type="PROSITE" id="PS50011">
    <property type="entry name" value="PROTEIN_KINASE_DOM"/>
    <property type="match status" value="1"/>
</dbReference>
<dbReference type="PROSITE" id="PS00108">
    <property type="entry name" value="PROTEIN_KINASE_ST"/>
    <property type="match status" value="1"/>
</dbReference>
<sequence>MNGEESFVEDCSVFVEIDPSGRYGRYDEILGKGASKTVYRAFDEYEGIEVAWNQVKLRNFTRNPEELEKFFREIHLLKTLNHQNIMKFYTSWVDTNNLSINFVTELFTSGTLRQYRLRHRRVNIRAVKQWCKQILKGLLYLHSRSPPIIHRDLKCDNIFINGNQGEVKIGDLGLAAILRKSHAVRCVGTPEFMAPEVYDEEYNELVDVYAFGMCVLEMVTFDYPYSECTHPAQIYKKVTSGKKPEAFYLVKDPEVREFVEKCLANVTCRLTALELLQDPFLQDDNMDGFVMRPIDYYNGYDETGVFLRHPLIDDPLYHDQFESSQICEIDLFANDDEDHVDISIKGKRNGDDGIFLRLRISDAEGRIRNIYFPFETAIDTAWSVAVEMVSELDITNQDVAKIAEMIDAEIAALVPDWKNDTESSQNVNNNKNNNTAGFCGECASNGYIQETVSSGEKSHHNHHEFDSSEDKSCSSVHGRFADMWGLRESYSDDGEKQSSRKVRSGRWSENEMRRELRWLKARHKIQLMKMRGQTICETPIEISLTPGTSVSLPLLYRAISLPVDAVDM</sequence>
<reference key="1">
    <citation type="journal article" date="2002" name="Biosci. Biotechnol. Biochem.">
        <title>Compilation and characterization of a novel WNK family of protein kinases in Arabiodpsis thaliana with reference to circadian rhythms.</title>
        <authorList>
            <person name="Nakamichi N."/>
            <person name="Murakami-Kojima M."/>
            <person name="Sato E."/>
            <person name="Kishi Y."/>
            <person name="Yamashino T."/>
            <person name="Mizuno T."/>
        </authorList>
    </citation>
    <scope>NUCLEOTIDE SEQUENCE [MRNA] (ISOFORM 2)</scope>
    <scope>INDUCTION</scope>
    <scope>AUTOPHOSPHORYLATION</scope>
    <source>
        <strain>cv. Columbia</strain>
    </source>
</reference>
<reference key="2">
    <citation type="journal article" date="2000" name="DNA Res.">
        <title>Structural analysis of Arabidopsis thaliana chromosome 3. I. Sequence features of the regions of 4,504,864 bp covered by sixty P1 and TAC clones.</title>
        <authorList>
            <person name="Sato S."/>
            <person name="Nakamura Y."/>
            <person name="Kaneko T."/>
            <person name="Katoh T."/>
            <person name="Asamizu E."/>
            <person name="Tabata S."/>
        </authorList>
    </citation>
    <scope>NUCLEOTIDE SEQUENCE [LARGE SCALE GENOMIC DNA]</scope>
    <source>
        <strain>cv. Columbia</strain>
    </source>
</reference>
<reference key="3">
    <citation type="journal article" date="2017" name="Plant J.">
        <title>Araport11: a complete reannotation of the Arabidopsis thaliana reference genome.</title>
        <authorList>
            <person name="Cheng C.Y."/>
            <person name="Krishnakumar V."/>
            <person name="Chan A.P."/>
            <person name="Thibaud-Nissen F."/>
            <person name="Schobel S."/>
            <person name="Town C.D."/>
        </authorList>
    </citation>
    <scope>GENOME REANNOTATION</scope>
    <source>
        <strain>cv. Columbia</strain>
    </source>
</reference>
<reference key="4">
    <citation type="submission" date="2006-07" db="EMBL/GenBank/DDBJ databases">
        <title>Large-scale analysis of RIKEN Arabidopsis full-length (RAFL) cDNAs.</title>
        <authorList>
            <person name="Totoki Y."/>
            <person name="Seki M."/>
            <person name="Ishida J."/>
            <person name="Nakajima M."/>
            <person name="Enju A."/>
            <person name="Kamiya A."/>
            <person name="Narusaka M."/>
            <person name="Shin-i T."/>
            <person name="Nakagawa M."/>
            <person name="Sakamoto N."/>
            <person name="Oishi K."/>
            <person name="Kohara Y."/>
            <person name="Kobayashi M."/>
            <person name="Toyoda A."/>
            <person name="Sakaki Y."/>
            <person name="Sakurai T."/>
            <person name="Iida K."/>
            <person name="Akiyama K."/>
            <person name="Satou M."/>
            <person name="Toyoda T."/>
            <person name="Konagaya A."/>
            <person name="Carninci P."/>
            <person name="Kawai J."/>
            <person name="Hayashizaki Y."/>
            <person name="Shinozaki K."/>
        </authorList>
    </citation>
    <scope>NUCLEOTIDE SEQUENCE [LARGE SCALE MRNA] (ISOFORM 2)</scope>
    <source>
        <strain>cv. Columbia</strain>
    </source>
</reference>
<reference key="5">
    <citation type="submission" date="2007-03" db="EMBL/GenBank/DDBJ databases">
        <title>Arabidopsis ORF clones.</title>
        <authorList>
            <person name="Bautista V.R."/>
            <person name="Kim C.J."/>
            <person name="Chen H."/>
            <person name="Wu S.Y."/>
            <person name="De Los Reyes C."/>
            <person name="Ecker J.R."/>
        </authorList>
    </citation>
    <scope>NUCLEOTIDE SEQUENCE [LARGE SCALE MRNA] (ISOFORM 2)</scope>
    <source>
        <strain>cv. Columbia</strain>
    </source>
</reference>
<reference key="6">
    <citation type="submission" date="2002-03" db="EMBL/GenBank/DDBJ databases">
        <title>Full-length cDNA from Arabidopsis thaliana.</title>
        <authorList>
            <person name="Brover V.V."/>
            <person name="Troukhan M.E."/>
            <person name="Alexandrov N.A."/>
            <person name="Lu Y.-P."/>
            <person name="Flavell R.B."/>
            <person name="Feldmann K.A."/>
        </authorList>
    </citation>
    <scope>NUCLEOTIDE SEQUENCE [LARGE SCALE MRNA] (ISOFORM 2)</scope>
</reference>
<reference key="7">
    <citation type="journal article" date="2008" name="Plant Biol.">
        <title>The plant WNK gene family and regulation of flowering time in Arabidopsis.</title>
        <authorList>
            <person name="Wang Y."/>
            <person name="Liu K."/>
            <person name="Liao H."/>
            <person name="Zhuang C."/>
            <person name="Ma H."/>
            <person name="Yan X."/>
        </authorList>
    </citation>
    <scope>FUNCTION</scope>
    <scope>DISRUPTION PHENOTYPE</scope>
</reference>
<comment type="function">
    <text evidence="6">Regulates flowering time by modulating the photoperiod pathway. Possesses kinase activity in vitro.</text>
</comment>
<comment type="catalytic activity">
    <reaction>
        <text>L-seryl-[protein] + ATP = O-phospho-L-seryl-[protein] + ADP + H(+)</text>
        <dbReference type="Rhea" id="RHEA:17989"/>
        <dbReference type="Rhea" id="RHEA-COMP:9863"/>
        <dbReference type="Rhea" id="RHEA-COMP:11604"/>
        <dbReference type="ChEBI" id="CHEBI:15378"/>
        <dbReference type="ChEBI" id="CHEBI:29999"/>
        <dbReference type="ChEBI" id="CHEBI:30616"/>
        <dbReference type="ChEBI" id="CHEBI:83421"/>
        <dbReference type="ChEBI" id="CHEBI:456216"/>
        <dbReference type="EC" id="2.7.11.1"/>
    </reaction>
</comment>
<comment type="catalytic activity">
    <reaction>
        <text>L-threonyl-[protein] + ATP = O-phospho-L-threonyl-[protein] + ADP + H(+)</text>
        <dbReference type="Rhea" id="RHEA:46608"/>
        <dbReference type="Rhea" id="RHEA-COMP:11060"/>
        <dbReference type="Rhea" id="RHEA-COMP:11605"/>
        <dbReference type="ChEBI" id="CHEBI:15378"/>
        <dbReference type="ChEBI" id="CHEBI:30013"/>
        <dbReference type="ChEBI" id="CHEBI:30616"/>
        <dbReference type="ChEBI" id="CHEBI:61977"/>
        <dbReference type="ChEBI" id="CHEBI:456216"/>
        <dbReference type="EC" id="2.7.11.1"/>
    </reaction>
</comment>
<comment type="alternative products">
    <event type="alternative splicing"/>
    <isoform>
        <id>Q8S8Y9-1</id>
        <name>1</name>
        <sequence type="displayed"/>
    </isoform>
    <isoform>
        <id>Q8S8Y9-2</id>
        <name>2</name>
        <sequence type="described" ref="VSP_035528 VSP_035529"/>
    </isoform>
</comment>
<comment type="induction">
    <text evidence="5">Expressed with a circadian rhythm showing a peak before dawn.</text>
</comment>
<comment type="PTM">
    <text>Autophosphorylated.</text>
</comment>
<comment type="disruption phenotype">
    <text evidence="6">Plants display early flowering and altered expression of genes involved in the photoperiod flowering pathway, such as ELF4, TOC1, CO and FT.</text>
</comment>
<comment type="similarity">
    <text evidence="3">Belongs to the protein kinase superfamily. Ser/Thr protein kinase family. WNK subfamily.</text>
</comment>
<comment type="caution">
    <text evidence="1">Was named WNK/'with no lysine(K)' because key residues for catalysis, including the lysine involved in ATP binding, are either not conserved or differ compared to the residues described in other kinase family proteins.</text>
</comment>
<comment type="sequence caution" evidence="11">
    <conflict type="erroneous gene model prediction">
        <sequence resource="EMBL-CDS" id="BAB01779"/>
    </conflict>
</comment>